<gene>
    <name type="ordered locus">PA0445</name>
</gene>
<gene>
    <name type="ordered locus">PA2319</name>
</gene>
<gene>
    <name type="ordered locus">PA2690</name>
</gene>
<gene>
    <name type="ordered locus">PA3434</name>
</gene>
<gene>
    <name type="ordered locus">PA3993</name>
</gene>
<gene>
    <name type="ordered locus">PA4797</name>
</gene>
<protein>
    <recommendedName>
        <fullName>Probable family 20 transposase</fullName>
    </recommendedName>
</protein>
<organism>
    <name type="scientific">Pseudomonas aeruginosa (strain ATCC 15692 / DSM 22644 / CIP 104116 / JCM 14847 / LMG 12228 / 1C / PRS 101 / PAO1)</name>
    <dbReference type="NCBI Taxonomy" id="208964"/>
    <lineage>
        <taxon>Bacteria</taxon>
        <taxon>Pseudomonadati</taxon>
        <taxon>Pseudomonadota</taxon>
        <taxon>Gammaproteobacteria</taxon>
        <taxon>Pseudomonadales</taxon>
        <taxon>Pseudomonadaceae</taxon>
        <taxon>Pseudomonas</taxon>
    </lineage>
</organism>
<proteinExistence type="inferred from homology"/>
<accession>Q9HI37</accession>
<keyword id="KW-0233">DNA recombination</keyword>
<keyword id="KW-0238">DNA-binding</keyword>
<keyword id="KW-1185">Reference proteome</keyword>
<keyword id="KW-0814">Transposable element</keyword>
<keyword id="KW-0815">Transposition</keyword>
<feature type="chain" id="PRO_0000288794" description="Probable family 20 transposase">
    <location>
        <begin position="1"/>
        <end position="338"/>
    </location>
</feature>
<reference key="1">
    <citation type="journal article" date="2000" name="Nature">
        <title>Complete genome sequence of Pseudomonas aeruginosa PAO1, an opportunistic pathogen.</title>
        <authorList>
            <person name="Stover C.K."/>
            <person name="Pham X.-Q.T."/>
            <person name="Erwin A.L."/>
            <person name="Mizoguchi S.D."/>
            <person name="Warrener P."/>
            <person name="Hickey M.J."/>
            <person name="Brinkman F.S.L."/>
            <person name="Hufnagle W.O."/>
            <person name="Kowalik D.J."/>
            <person name="Lagrou M."/>
            <person name="Garber R.L."/>
            <person name="Goltry L."/>
            <person name="Tolentino E."/>
            <person name="Westbrock-Wadman S."/>
            <person name="Yuan Y."/>
            <person name="Brody L.L."/>
            <person name="Coulter S.N."/>
            <person name="Folger K.R."/>
            <person name="Kas A."/>
            <person name="Larbig K."/>
            <person name="Lim R.M."/>
            <person name="Smith K.A."/>
            <person name="Spencer D.H."/>
            <person name="Wong G.K.-S."/>
            <person name="Wu Z."/>
            <person name="Paulsen I.T."/>
            <person name="Reizer J."/>
            <person name="Saier M.H. Jr."/>
            <person name="Hancock R.E.W."/>
            <person name="Lory S."/>
            <person name="Olson M.V."/>
        </authorList>
    </citation>
    <scope>NUCLEOTIDE SEQUENCE [LARGE SCALE GENOMIC DNA]</scope>
    <source>
        <strain>ATCC 15692 / DSM 22644 / CIP 104116 / JCM 14847 / LMG 12228 / 1C / PRS 101 / PAO1</strain>
    </source>
</reference>
<comment type="function">
    <text evidence="1">Required for the transposition of an insertion element.</text>
</comment>
<comment type="similarity">
    <text evidence="1">Belongs to the transposase 20 family.</text>
</comment>
<sequence length="338" mass="37677">MNLSRIGLDLAKQVFQVHGVDRHEHVVCRRQLKRAQVRDFFRQLPPCLVAMEACGSAHYWARELRELGHTVRLIAPQFVKPYVKGDKHDAHDAEAICEAASRPSMRYVPVKSAEQQAVQSMHRVRSRLVRARTALCNEVRGLLGEFGLIATRRGRAATMALLETVMATEPAPLPAPMGELLRELKDELQTLEARIARLERQIQAHVRGDARIQRLLAVEGIGPISASAVAASAGDARQFRTGRQFAAWLGLVPRQHSTGGQQRLGNISKRGDTYLRTLLIHGARAVVRCCANKTDARSRWLQGLLQRRPANVVAVALANKNARILWALLSRETCYRPG</sequence>
<dbReference type="EMBL" id="AE004091">
    <property type="protein sequence ID" value="AAG03834.1"/>
    <property type="molecule type" value="Genomic_DNA"/>
</dbReference>
<dbReference type="EMBL" id="AE004091">
    <property type="protein sequence ID" value="AAG05707.1"/>
    <property type="molecule type" value="Genomic_DNA"/>
</dbReference>
<dbReference type="EMBL" id="AE004091">
    <property type="protein sequence ID" value="AAG06078.1"/>
    <property type="molecule type" value="Genomic_DNA"/>
</dbReference>
<dbReference type="EMBL" id="AE004091">
    <property type="protein sequence ID" value="AAG06822.1"/>
    <property type="molecule type" value="Genomic_DNA"/>
</dbReference>
<dbReference type="EMBL" id="AE004091">
    <property type="protein sequence ID" value="AAG07380.1"/>
    <property type="molecule type" value="Genomic_DNA"/>
</dbReference>
<dbReference type="EMBL" id="AE004091">
    <property type="protein sequence ID" value="AAG08183.1"/>
    <property type="molecule type" value="Genomic_DNA"/>
</dbReference>
<dbReference type="PIR" id="H83216">
    <property type="entry name" value="H83216"/>
</dbReference>
<dbReference type="RefSeq" id="NP_249136.1">
    <property type="nucleotide sequence ID" value="NC_002516.2"/>
</dbReference>
<dbReference type="RefSeq" id="NP_251009.1">
    <property type="nucleotide sequence ID" value="NC_002516.2"/>
</dbReference>
<dbReference type="RefSeq" id="NP_251380.1">
    <property type="nucleotide sequence ID" value="NC_002516.2"/>
</dbReference>
<dbReference type="RefSeq" id="NP_252124.1">
    <property type="nucleotide sequence ID" value="NC_002516.2"/>
</dbReference>
<dbReference type="RefSeq" id="NP_252682.1">
    <property type="nucleotide sequence ID" value="NC_002516.2"/>
</dbReference>
<dbReference type="RefSeq" id="NP_253485.1">
    <property type="nucleotide sequence ID" value="NC_002516.2"/>
</dbReference>
<dbReference type="RefSeq" id="WP_003147159.1">
    <property type="nucleotide sequence ID" value="NZ_QZGE01000059.1"/>
</dbReference>
<dbReference type="SMR" id="Q9HI37"/>
<dbReference type="STRING" id="208964.PA0445"/>
<dbReference type="PaxDb" id="208964-PA0445"/>
<dbReference type="DNASU" id="882896"/>
<dbReference type="GeneID" id="878900"/>
<dbReference type="GeneID" id="878942"/>
<dbReference type="GeneID" id="879390"/>
<dbReference type="GeneID" id="880407"/>
<dbReference type="GeneID" id="881905"/>
<dbReference type="GeneID" id="882896"/>
<dbReference type="KEGG" id="pae:PA0445"/>
<dbReference type="KEGG" id="pae:PA2319"/>
<dbReference type="KEGG" id="pae:PA2690"/>
<dbReference type="KEGG" id="pae:PA3434"/>
<dbReference type="KEGG" id="pae:PA3993"/>
<dbReference type="KEGG" id="pae:PA4797"/>
<dbReference type="PATRIC" id="fig|208964.12.peg.2424"/>
<dbReference type="PseudoCAP" id="PA4797"/>
<dbReference type="HOGENOM" id="CLU_036902_3_1_6"/>
<dbReference type="InParanoid" id="Q9HI37"/>
<dbReference type="OrthoDB" id="5289737at2"/>
<dbReference type="PhylomeDB" id="Q9HI37"/>
<dbReference type="BioCyc" id="PAER208964:G1FZ6-2358-MONOMER"/>
<dbReference type="BioCyc" id="PAER208964:G1FZ6-2730-MONOMER"/>
<dbReference type="BioCyc" id="PAER208964:G1FZ6-4066-MONOMER"/>
<dbReference type="BioCyc" id="PAER208964:G1FZ6-4910-MONOMER"/>
<dbReference type="Proteomes" id="UP000002438">
    <property type="component" value="Chromosome"/>
</dbReference>
<dbReference type="GO" id="GO:0003677">
    <property type="term" value="F:DNA binding"/>
    <property type="evidence" value="ECO:0007669"/>
    <property type="project" value="UniProtKB-KW"/>
</dbReference>
<dbReference type="GO" id="GO:0004803">
    <property type="term" value="F:transposase activity"/>
    <property type="evidence" value="ECO:0007669"/>
    <property type="project" value="InterPro"/>
</dbReference>
<dbReference type="GO" id="GO:0006313">
    <property type="term" value="P:DNA transposition"/>
    <property type="evidence" value="ECO:0007669"/>
    <property type="project" value="InterPro"/>
</dbReference>
<dbReference type="InterPro" id="IPR002525">
    <property type="entry name" value="Transp_IS110-like_N"/>
</dbReference>
<dbReference type="InterPro" id="IPR047650">
    <property type="entry name" value="Transpos_IS110"/>
</dbReference>
<dbReference type="InterPro" id="IPR003346">
    <property type="entry name" value="Transposase_20"/>
</dbReference>
<dbReference type="NCBIfam" id="NF033542">
    <property type="entry name" value="transpos_IS110"/>
    <property type="match status" value="1"/>
</dbReference>
<dbReference type="PANTHER" id="PTHR33055:SF3">
    <property type="entry name" value="PUTATIVE TRANSPOSASE FOR IS117-RELATED"/>
    <property type="match status" value="1"/>
</dbReference>
<dbReference type="PANTHER" id="PTHR33055">
    <property type="entry name" value="TRANSPOSASE FOR INSERTION SEQUENCE ELEMENT IS1111A"/>
    <property type="match status" value="1"/>
</dbReference>
<dbReference type="Pfam" id="PF01548">
    <property type="entry name" value="DEDD_Tnp_IS110"/>
    <property type="match status" value="1"/>
</dbReference>
<dbReference type="Pfam" id="PF02371">
    <property type="entry name" value="Transposase_20"/>
    <property type="match status" value="1"/>
</dbReference>
<name>TPF20_PSEAE</name>
<evidence type="ECO:0000305" key="1"/>